<keyword id="KW-0002">3D-structure</keyword>
<keyword id="KW-0067">ATP-binding</keyword>
<keyword id="KW-0963">Cytoplasm</keyword>
<keyword id="KW-0418">Kinase</keyword>
<keyword id="KW-0460">Magnesium</keyword>
<keyword id="KW-0479">Metal-binding</keyword>
<keyword id="KW-0545">Nucleotide biosynthesis</keyword>
<keyword id="KW-0547">Nucleotide-binding</keyword>
<keyword id="KW-1185">Reference proteome</keyword>
<keyword id="KW-0808">Transferase</keyword>
<reference key="1">
    <citation type="journal article" date="2004" name="Proc. Natl. Acad. Sci. U.S.A.">
        <title>Genomic plasticity of the causative agent of melioidosis, Burkholderia pseudomallei.</title>
        <authorList>
            <person name="Holden M.T.G."/>
            <person name="Titball R.W."/>
            <person name="Peacock S.J."/>
            <person name="Cerdeno-Tarraga A.-M."/>
            <person name="Atkins T."/>
            <person name="Crossman L.C."/>
            <person name="Pitt T."/>
            <person name="Churcher C."/>
            <person name="Mungall K.L."/>
            <person name="Bentley S.D."/>
            <person name="Sebaihia M."/>
            <person name="Thomson N.R."/>
            <person name="Bason N."/>
            <person name="Beacham I.R."/>
            <person name="Brooks K."/>
            <person name="Brown K.A."/>
            <person name="Brown N.F."/>
            <person name="Challis G.L."/>
            <person name="Cherevach I."/>
            <person name="Chillingworth T."/>
            <person name="Cronin A."/>
            <person name="Crossett B."/>
            <person name="Davis P."/>
            <person name="DeShazer D."/>
            <person name="Feltwell T."/>
            <person name="Fraser A."/>
            <person name="Hance Z."/>
            <person name="Hauser H."/>
            <person name="Holroyd S."/>
            <person name="Jagels K."/>
            <person name="Keith K.E."/>
            <person name="Maddison M."/>
            <person name="Moule S."/>
            <person name="Price C."/>
            <person name="Quail M.A."/>
            <person name="Rabbinowitsch E."/>
            <person name="Rutherford K."/>
            <person name="Sanders M."/>
            <person name="Simmonds M."/>
            <person name="Songsivilai S."/>
            <person name="Stevens K."/>
            <person name="Tumapa S."/>
            <person name="Vesaratchavest M."/>
            <person name="Whitehead S."/>
            <person name="Yeats C."/>
            <person name="Barrell B.G."/>
            <person name="Oyston P.C.F."/>
            <person name="Parkhill J."/>
        </authorList>
    </citation>
    <scope>NUCLEOTIDE SEQUENCE [LARGE SCALE GENOMIC DNA]</scope>
    <source>
        <strain>K96243</strain>
    </source>
</reference>
<reference key="2">
    <citation type="journal article" date="2013" name="PLoS ONE">
        <title>Combining functional and structural genomics to sample the essential Burkholderia structome.</title>
        <authorList>
            <person name="Baugh L."/>
            <person name="Gallagher L.A."/>
            <person name="Patrapuvich R."/>
            <person name="Clifton M.C."/>
            <person name="Gardberg A.S."/>
            <person name="Edwards T.E."/>
            <person name="Armour B."/>
            <person name="Begley D.W."/>
            <person name="Dieterich S.H."/>
            <person name="Dranow D.M."/>
            <person name="Abendroth J."/>
            <person name="Fairman J.W."/>
            <person name="Fox D."/>
            <person name="Staker B.L."/>
            <person name="Phan I."/>
            <person name="Gillespie A."/>
            <person name="Choi R."/>
            <person name="Nakazawa-Hewitt S."/>
            <person name="Nguyen M.T."/>
            <person name="Napuli A."/>
            <person name="Barrett L."/>
            <person name="Buchko G.W."/>
            <person name="Stacy R."/>
            <person name="Myler P.J."/>
            <person name="Stewart L.J."/>
            <person name="Manoil C."/>
            <person name="Van Voorhis W.C."/>
        </authorList>
    </citation>
    <scope>X-RAY CRYSTALLOGRAPHY (2.30 ANGSTROMS) IN COMPLEX WITH AMP AND SUBSTRATE ANALOGS</scope>
</reference>
<protein>
    <recommendedName>
        <fullName evidence="1">Ribose-phosphate pyrophosphokinase</fullName>
        <shortName evidence="1">RPPK</shortName>
        <ecNumber evidence="1">2.7.6.1</ecNumber>
    </recommendedName>
    <alternativeName>
        <fullName evidence="1">5-phospho-D-ribosyl alpha-1-diphosphate synthase</fullName>
    </alternativeName>
    <alternativeName>
        <fullName evidence="1">Phosphoribosyl diphosphate synthase</fullName>
    </alternativeName>
    <alternativeName>
        <fullName evidence="1">Phosphoribosyl pyrophosphate synthase</fullName>
        <shortName evidence="1">P-Rib-PP synthase</shortName>
        <shortName evidence="1">PRPP synthase</shortName>
        <shortName evidence="1">PRPPase</shortName>
    </alternativeName>
</protein>
<accession>Q63XL8</accession>
<gene>
    <name evidence="1" type="primary">prs</name>
    <name evidence="4" type="ordered locus">BPSL0521</name>
</gene>
<proteinExistence type="evidence at protein level"/>
<comment type="function">
    <text evidence="1">Involved in the biosynthesis of the central metabolite phospho-alpha-D-ribosyl-1-pyrophosphate (PRPP) via the transfer of pyrophosphoryl group from ATP to 1-hydroxyl of ribose-5-phosphate (Rib-5-P).</text>
</comment>
<comment type="catalytic activity">
    <reaction evidence="1">
        <text>D-ribose 5-phosphate + ATP = 5-phospho-alpha-D-ribose 1-diphosphate + AMP + H(+)</text>
        <dbReference type="Rhea" id="RHEA:15609"/>
        <dbReference type="ChEBI" id="CHEBI:15378"/>
        <dbReference type="ChEBI" id="CHEBI:30616"/>
        <dbReference type="ChEBI" id="CHEBI:58017"/>
        <dbReference type="ChEBI" id="CHEBI:78346"/>
        <dbReference type="ChEBI" id="CHEBI:456215"/>
        <dbReference type="EC" id="2.7.6.1"/>
    </reaction>
</comment>
<comment type="cofactor">
    <cofactor evidence="1">
        <name>Mg(2+)</name>
        <dbReference type="ChEBI" id="CHEBI:18420"/>
    </cofactor>
    <text evidence="1">Binds 2 Mg(2+) ions per subunit.</text>
</comment>
<comment type="pathway">
    <text evidence="1">Metabolic intermediate biosynthesis; 5-phospho-alpha-D-ribose 1-diphosphate biosynthesis; 5-phospho-alpha-D-ribose 1-diphosphate from D-ribose 5-phosphate (route I): step 1/1.</text>
</comment>
<comment type="subunit">
    <text evidence="1">Homohexamer.</text>
</comment>
<comment type="subcellular location">
    <subcellularLocation>
        <location evidence="1">Cytoplasm</location>
    </subcellularLocation>
</comment>
<comment type="similarity">
    <text evidence="1">Belongs to the ribose-phosphate pyrophosphokinase family. Class I subfamily.</text>
</comment>
<evidence type="ECO:0000255" key="1">
    <source>
        <dbReference type="HAMAP-Rule" id="MF_00583"/>
    </source>
</evidence>
<evidence type="ECO:0000269" key="2">
    <source>
    </source>
</evidence>
<evidence type="ECO:0000305" key="3">
    <source>
    </source>
</evidence>
<evidence type="ECO:0000312" key="4">
    <source>
        <dbReference type="EMBL" id="CAH34511.1"/>
    </source>
</evidence>
<evidence type="ECO:0007744" key="5">
    <source>
        <dbReference type="PDB" id="3DAH"/>
    </source>
</evidence>
<evidence type="ECO:0007829" key="6">
    <source>
        <dbReference type="PDB" id="3DAH"/>
    </source>
</evidence>
<name>KPRS_BURPS</name>
<dbReference type="EC" id="2.7.6.1" evidence="1"/>
<dbReference type="EMBL" id="BX571965">
    <property type="protein sequence ID" value="CAH34511.1"/>
    <property type="molecule type" value="Genomic_DNA"/>
</dbReference>
<dbReference type="RefSeq" id="WP_004195243.1">
    <property type="nucleotide sequence ID" value="NZ_CP009538.1"/>
</dbReference>
<dbReference type="RefSeq" id="YP_107147.1">
    <property type="nucleotide sequence ID" value="NC_006350.1"/>
</dbReference>
<dbReference type="PDB" id="3DAH">
    <property type="method" value="X-ray"/>
    <property type="resolution" value="2.30 A"/>
    <property type="chains" value="A/B/C=1-318"/>
</dbReference>
<dbReference type="PDBsum" id="3DAH"/>
<dbReference type="SMR" id="Q63XL8"/>
<dbReference type="STRING" id="272560.BPSL0521"/>
<dbReference type="KEGG" id="bps:BPSL0521"/>
<dbReference type="PATRIC" id="fig|272560.51.peg.1126"/>
<dbReference type="eggNOG" id="COG0462">
    <property type="taxonomic scope" value="Bacteria"/>
</dbReference>
<dbReference type="UniPathway" id="UPA00087">
    <property type="reaction ID" value="UER00172"/>
</dbReference>
<dbReference type="EvolutionaryTrace" id="Q63XL8"/>
<dbReference type="Proteomes" id="UP000000605">
    <property type="component" value="Chromosome 1"/>
</dbReference>
<dbReference type="GO" id="GO:0005737">
    <property type="term" value="C:cytoplasm"/>
    <property type="evidence" value="ECO:0007669"/>
    <property type="project" value="UniProtKB-SubCell"/>
</dbReference>
<dbReference type="GO" id="GO:0002189">
    <property type="term" value="C:ribose phosphate diphosphokinase complex"/>
    <property type="evidence" value="ECO:0007669"/>
    <property type="project" value="TreeGrafter"/>
</dbReference>
<dbReference type="GO" id="GO:0005524">
    <property type="term" value="F:ATP binding"/>
    <property type="evidence" value="ECO:0007669"/>
    <property type="project" value="UniProtKB-KW"/>
</dbReference>
<dbReference type="GO" id="GO:0016301">
    <property type="term" value="F:kinase activity"/>
    <property type="evidence" value="ECO:0007669"/>
    <property type="project" value="UniProtKB-KW"/>
</dbReference>
<dbReference type="GO" id="GO:0000287">
    <property type="term" value="F:magnesium ion binding"/>
    <property type="evidence" value="ECO:0007669"/>
    <property type="project" value="UniProtKB-UniRule"/>
</dbReference>
<dbReference type="GO" id="GO:0004749">
    <property type="term" value="F:ribose phosphate diphosphokinase activity"/>
    <property type="evidence" value="ECO:0007669"/>
    <property type="project" value="UniProtKB-UniRule"/>
</dbReference>
<dbReference type="GO" id="GO:0006015">
    <property type="term" value="P:5-phosphoribose 1-diphosphate biosynthetic process"/>
    <property type="evidence" value="ECO:0007669"/>
    <property type="project" value="UniProtKB-UniRule"/>
</dbReference>
<dbReference type="GO" id="GO:0006164">
    <property type="term" value="P:purine nucleotide biosynthetic process"/>
    <property type="evidence" value="ECO:0007669"/>
    <property type="project" value="TreeGrafter"/>
</dbReference>
<dbReference type="GO" id="GO:0009156">
    <property type="term" value="P:ribonucleoside monophosphate biosynthetic process"/>
    <property type="evidence" value="ECO:0007669"/>
    <property type="project" value="InterPro"/>
</dbReference>
<dbReference type="CDD" id="cd06223">
    <property type="entry name" value="PRTases_typeI"/>
    <property type="match status" value="1"/>
</dbReference>
<dbReference type="FunFam" id="3.40.50.2020:FF:000001">
    <property type="entry name" value="Ribose-phosphate pyrophosphokinase"/>
    <property type="match status" value="1"/>
</dbReference>
<dbReference type="Gene3D" id="3.40.50.2020">
    <property type="match status" value="2"/>
</dbReference>
<dbReference type="HAMAP" id="MF_00583_B">
    <property type="entry name" value="RibP_PPkinase_B"/>
    <property type="match status" value="1"/>
</dbReference>
<dbReference type="InterPro" id="IPR000842">
    <property type="entry name" value="PRib_PP_synth_CS"/>
</dbReference>
<dbReference type="InterPro" id="IPR029099">
    <property type="entry name" value="Pribosyltran_N"/>
</dbReference>
<dbReference type="InterPro" id="IPR000836">
    <property type="entry name" value="PRibTrfase_dom"/>
</dbReference>
<dbReference type="InterPro" id="IPR029057">
    <property type="entry name" value="PRTase-like"/>
</dbReference>
<dbReference type="InterPro" id="IPR005946">
    <property type="entry name" value="Rib-P_diPkinase"/>
</dbReference>
<dbReference type="InterPro" id="IPR037515">
    <property type="entry name" value="Rib-P_diPkinase_bac"/>
</dbReference>
<dbReference type="NCBIfam" id="NF002320">
    <property type="entry name" value="PRK01259.1"/>
    <property type="match status" value="1"/>
</dbReference>
<dbReference type="NCBIfam" id="TIGR01251">
    <property type="entry name" value="ribP_PPkin"/>
    <property type="match status" value="1"/>
</dbReference>
<dbReference type="PANTHER" id="PTHR10210">
    <property type="entry name" value="RIBOSE-PHOSPHATE DIPHOSPHOKINASE FAMILY MEMBER"/>
    <property type="match status" value="1"/>
</dbReference>
<dbReference type="PANTHER" id="PTHR10210:SF41">
    <property type="entry name" value="RIBOSE-PHOSPHATE PYROPHOSPHOKINASE 1, CHLOROPLASTIC"/>
    <property type="match status" value="1"/>
</dbReference>
<dbReference type="Pfam" id="PF14572">
    <property type="entry name" value="Pribosyl_synth"/>
    <property type="match status" value="1"/>
</dbReference>
<dbReference type="Pfam" id="PF13793">
    <property type="entry name" value="Pribosyltran_N"/>
    <property type="match status" value="1"/>
</dbReference>
<dbReference type="SMART" id="SM01400">
    <property type="entry name" value="Pribosyltran_N"/>
    <property type="match status" value="1"/>
</dbReference>
<dbReference type="SUPFAM" id="SSF53271">
    <property type="entry name" value="PRTase-like"/>
    <property type="match status" value="1"/>
</dbReference>
<dbReference type="PROSITE" id="PS00114">
    <property type="entry name" value="PRPP_SYNTHASE"/>
    <property type="match status" value="1"/>
</dbReference>
<feature type="chain" id="PRO_0000441886" description="Ribose-phosphate pyrophosphokinase">
    <location>
        <begin position="1"/>
        <end position="318"/>
    </location>
</feature>
<feature type="active site" evidence="1">
    <location>
        <position position="196"/>
    </location>
</feature>
<feature type="binding site" evidence="1">
    <location>
        <begin position="40"/>
        <end position="42"/>
    </location>
    <ligand>
        <name>ATP</name>
        <dbReference type="ChEBI" id="CHEBI:30616"/>
    </ligand>
</feature>
<feature type="binding site" evidence="1 2 5">
    <location>
        <begin position="99"/>
        <end position="100"/>
    </location>
    <ligand>
        <name>ATP</name>
        <dbReference type="ChEBI" id="CHEBI:30616"/>
    </ligand>
</feature>
<feature type="binding site" evidence="1">
    <location>
        <position position="134"/>
    </location>
    <ligand>
        <name>Mg(2+)</name>
        <dbReference type="ChEBI" id="CHEBI:18420"/>
        <label>1</label>
    </ligand>
</feature>
<feature type="binding site" evidence="1">
    <location>
        <position position="173"/>
    </location>
    <ligand>
        <name>Mg(2+)</name>
        <dbReference type="ChEBI" id="CHEBI:18420"/>
        <label>2</label>
    </ligand>
</feature>
<feature type="binding site" evidence="1">
    <location>
        <position position="198"/>
    </location>
    <ligand>
        <name>D-ribose 5-phosphate</name>
        <dbReference type="ChEBI" id="CHEBI:78346"/>
    </ligand>
</feature>
<feature type="binding site" evidence="1">
    <location>
        <position position="222"/>
    </location>
    <ligand>
        <name>D-ribose 5-phosphate</name>
        <dbReference type="ChEBI" id="CHEBI:78346"/>
    </ligand>
</feature>
<feature type="binding site" evidence="1 3 5">
    <location>
        <begin position="226"/>
        <end position="230"/>
    </location>
    <ligand>
        <name>D-ribose 5-phosphate</name>
        <dbReference type="ChEBI" id="CHEBI:78346"/>
    </ligand>
</feature>
<feature type="strand" evidence="6">
    <location>
        <begin position="7"/>
        <end position="11"/>
    </location>
</feature>
<feature type="helix" evidence="6">
    <location>
        <begin position="16"/>
        <end position="26"/>
    </location>
</feature>
<feature type="strand" evidence="6">
    <location>
        <begin position="33"/>
        <end position="37"/>
    </location>
</feature>
<feature type="strand" evidence="6">
    <location>
        <begin position="43"/>
        <end position="47"/>
    </location>
</feature>
<feature type="strand" evidence="6">
    <location>
        <begin position="55"/>
        <end position="59"/>
    </location>
</feature>
<feature type="helix" evidence="6">
    <location>
        <begin position="66"/>
        <end position="82"/>
    </location>
</feature>
<feature type="strand" evidence="6">
    <location>
        <begin position="85"/>
        <end position="94"/>
    </location>
</feature>
<feature type="turn" evidence="6">
    <location>
        <begin position="96"/>
        <end position="99"/>
    </location>
</feature>
<feature type="helix" evidence="6">
    <location>
        <begin position="112"/>
        <end position="123"/>
    </location>
</feature>
<feature type="strand" evidence="6">
    <location>
        <begin position="127"/>
        <end position="132"/>
    </location>
</feature>
<feature type="helix" evidence="6">
    <location>
        <begin position="136"/>
        <end position="141"/>
    </location>
</feature>
<feature type="strand" evidence="6">
    <location>
        <begin position="146"/>
        <end position="149"/>
    </location>
</feature>
<feature type="helix" evidence="6">
    <location>
        <begin position="152"/>
        <end position="160"/>
    </location>
</feature>
<feature type="strand" evidence="6">
    <location>
        <begin position="167"/>
        <end position="170"/>
    </location>
</feature>
<feature type="helix" evidence="6">
    <location>
        <begin position="177"/>
        <end position="186"/>
    </location>
</feature>
<feature type="strand" evidence="6">
    <location>
        <begin position="190"/>
        <end position="192"/>
    </location>
</feature>
<feature type="strand" evidence="6">
    <location>
        <begin position="208"/>
        <end position="210"/>
    </location>
</feature>
<feature type="strand" evidence="6">
    <location>
        <begin position="216"/>
        <end position="227"/>
    </location>
</feature>
<feature type="helix" evidence="6">
    <location>
        <begin position="229"/>
        <end position="240"/>
    </location>
</feature>
<feature type="strand" evidence="6">
    <location>
        <begin position="246"/>
        <end position="253"/>
    </location>
</feature>
<feature type="helix" evidence="6">
    <location>
        <begin position="259"/>
        <end position="264"/>
    </location>
</feature>
<feature type="strand" evidence="6">
    <location>
        <begin position="269"/>
        <end position="277"/>
    </location>
</feature>
<feature type="helix" evidence="6">
    <location>
        <begin position="281"/>
        <end position="285"/>
    </location>
</feature>
<feature type="strand" evidence="6">
    <location>
        <begin position="289"/>
        <end position="292"/>
    </location>
</feature>
<feature type="helix" evidence="6">
    <location>
        <begin position="295"/>
        <end position="307"/>
    </location>
</feature>
<sequence>MSSHDGLMVFTGNANPALAQEVVKILGIPLGKAMVSRFSDGEIQVEIQENVRGKDVFVLQSTCAPTNDNLMELMIMVDALKRASAGRITAAIPYFGYARQDRRPRSARVAISAKVVANMLEIAGVERIITMDLHADQIQGFFDIPVDNIYATPILLGDLRKQNYPDLLVVSPDVGGVVRARALAKQLNCDLAIIDKRRPKANVAEVMNIIGEVEGRTCVIMDDMVDTAGTLCKAAQVLKERGAKQVFAYATHPVLSGGAADRIAASALDELVVTDTIPLSAESLACPKIRALSSAGLLAETFSRIRRGDSVMSLFAES</sequence>
<organism>
    <name type="scientific">Burkholderia pseudomallei (strain K96243)</name>
    <dbReference type="NCBI Taxonomy" id="272560"/>
    <lineage>
        <taxon>Bacteria</taxon>
        <taxon>Pseudomonadati</taxon>
        <taxon>Pseudomonadota</taxon>
        <taxon>Betaproteobacteria</taxon>
        <taxon>Burkholderiales</taxon>
        <taxon>Burkholderiaceae</taxon>
        <taxon>Burkholderia</taxon>
        <taxon>pseudomallei group</taxon>
    </lineage>
</organism>